<evidence type="ECO:0000255" key="1"/>
<evidence type="ECO:0000305" key="2"/>
<protein>
    <recommendedName>
        <fullName>Uncharacterized mitochondrial carrier C8C9.12c</fullName>
    </recommendedName>
</protein>
<name>YETC_SCHPO</name>
<sequence>MTYAAEDFDYEGLPIGSPMYAHLLAGAFSGILEHSVMYPVDAIKTRMQMLNGVSRSVSGNIVNSVIKISSTEGVYSLWRGISSVIMGAGPSHAIYFSVLEFFKSKINASPDRPLASALAGACAITISDAFMTPFDVIKQRMQLPSRKYKSALHCATTVFRNEGLGAFYISYPTCIAMSIPFTAIQVATYDTCMSFLNPNAVYDPTSHIISGGLSGAIASSLTTPLDVVKTLLQTRGSSSIPEVRKCKGSLDVVRFIYNYGGIPSFFKGIRPRMVVAMPATAVSWAAYEAGKEILIRVSKTSQA</sequence>
<organism>
    <name type="scientific">Schizosaccharomyces pombe (strain 972 / ATCC 24843)</name>
    <name type="common">Fission yeast</name>
    <dbReference type="NCBI Taxonomy" id="284812"/>
    <lineage>
        <taxon>Eukaryota</taxon>
        <taxon>Fungi</taxon>
        <taxon>Dikarya</taxon>
        <taxon>Ascomycota</taxon>
        <taxon>Taphrinomycotina</taxon>
        <taxon>Schizosaccharomycetes</taxon>
        <taxon>Schizosaccharomycetales</taxon>
        <taxon>Schizosaccharomycetaceae</taxon>
        <taxon>Schizosaccharomyces</taxon>
    </lineage>
</organism>
<dbReference type="EMBL" id="CU329670">
    <property type="protein sequence ID" value="CAB16300.1"/>
    <property type="molecule type" value="Genomic_DNA"/>
</dbReference>
<dbReference type="PIR" id="T39149">
    <property type="entry name" value="T39149"/>
</dbReference>
<dbReference type="SMR" id="O14281"/>
<dbReference type="BioGRID" id="279022">
    <property type="interactions" value="24"/>
</dbReference>
<dbReference type="FunCoup" id="O14281">
    <property type="interactions" value="214"/>
</dbReference>
<dbReference type="STRING" id="284812.O14281"/>
<dbReference type="iPTMnet" id="O14281"/>
<dbReference type="PaxDb" id="4896-SPAC8C9.12c.1"/>
<dbReference type="EnsemblFungi" id="SPAC8C9.12c.1">
    <property type="protein sequence ID" value="SPAC8C9.12c.1:pep"/>
    <property type="gene ID" value="SPAC8C9.12c"/>
</dbReference>
<dbReference type="KEGG" id="spo:2542566"/>
<dbReference type="PomBase" id="SPAC8C9.12c"/>
<dbReference type="VEuPathDB" id="FungiDB:SPAC8C9.12c"/>
<dbReference type="eggNOG" id="KOG0760">
    <property type="taxonomic scope" value="Eukaryota"/>
</dbReference>
<dbReference type="HOGENOM" id="CLU_015166_3_1_1"/>
<dbReference type="InParanoid" id="O14281"/>
<dbReference type="OMA" id="WRPMRGM"/>
<dbReference type="PhylomeDB" id="O14281"/>
<dbReference type="PRO" id="PR:O14281"/>
<dbReference type="Proteomes" id="UP000002485">
    <property type="component" value="Chromosome I"/>
</dbReference>
<dbReference type="GO" id="GO:0005743">
    <property type="term" value="C:mitochondrial inner membrane"/>
    <property type="evidence" value="ECO:0000266"/>
    <property type="project" value="PomBase"/>
</dbReference>
<dbReference type="GO" id="GO:0031966">
    <property type="term" value="C:mitochondrial membrane"/>
    <property type="evidence" value="ECO:0000318"/>
    <property type="project" value="GO_Central"/>
</dbReference>
<dbReference type="GO" id="GO:0015093">
    <property type="term" value="F:ferrous iron transmembrane transporter activity"/>
    <property type="evidence" value="ECO:0000318"/>
    <property type="project" value="GO_Central"/>
</dbReference>
<dbReference type="GO" id="GO:0048250">
    <property type="term" value="P:iron import into the mitochondrion"/>
    <property type="evidence" value="ECO:0000318"/>
    <property type="project" value="GO_Central"/>
</dbReference>
<dbReference type="Gene3D" id="1.50.40.10">
    <property type="entry name" value="Mitochondrial carrier domain"/>
    <property type="match status" value="2"/>
</dbReference>
<dbReference type="InterPro" id="IPR002067">
    <property type="entry name" value="Mit_carrier"/>
</dbReference>
<dbReference type="InterPro" id="IPR018108">
    <property type="entry name" value="Mitochondrial_sb/sol_carrier"/>
</dbReference>
<dbReference type="InterPro" id="IPR023395">
    <property type="entry name" value="Mt_carrier_dom_sf"/>
</dbReference>
<dbReference type="PANTHER" id="PTHR45758:SF4">
    <property type="entry name" value="MITOFERRIN-1"/>
    <property type="match status" value="1"/>
</dbReference>
<dbReference type="PANTHER" id="PTHR45758">
    <property type="entry name" value="MITOFERRIN-1-RELATED"/>
    <property type="match status" value="1"/>
</dbReference>
<dbReference type="Pfam" id="PF00153">
    <property type="entry name" value="Mito_carr"/>
    <property type="match status" value="3"/>
</dbReference>
<dbReference type="PRINTS" id="PR00926">
    <property type="entry name" value="MITOCARRIER"/>
</dbReference>
<dbReference type="SUPFAM" id="SSF103506">
    <property type="entry name" value="Mitochondrial carrier"/>
    <property type="match status" value="1"/>
</dbReference>
<dbReference type="PROSITE" id="PS50920">
    <property type="entry name" value="SOLCAR"/>
    <property type="match status" value="3"/>
</dbReference>
<proteinExistence type="inferred from homology"/>
<gene>
    <name type="ORF">SPAC8C9.12c</name>
</gene>
<keyword id="KW-0472">Membrane</keyword>
<keyword id="KW-0496">Mitochondrion</keyword>
<keyword id="KW-0999">Mitochondrion inner membrane</keyword>
<keyword id="KW-1185">Reference proteome</keyword>
<keyword id="KW-0677">Repeat</keyword>
<keyword id="KW-0812">Transmembrane</keyword>
<keyword id="KW-1133">Transmembrane helix</keyword>
<keyword id="KW-0813">Transport</keyword>
<reference key="1">
    <citation type="journal article" date="2002" name="Nature">
        <title>The genome sequence of Schizosaccharomyces pombe.</title>
        <authorList>
            <person name="Wood V."/>
            <person name="Gwilliam R."/>
            <person name="Rajandream M.A."/>
            <person name="Lyne M.H."/>
            <person name="Lyne R."/>
            <person name="Stewart A."/>
            <person name="Sgouros J.G."/>
            <person name="Peat N."/>
            <person name="Hayles J."/>
            <person name="Baker S.G."/>
            <person name="Basham D."/>
            <person name="Bowman S."/>
            <person name="Brooks K."/>
            <person name="Brown D."/>
            <person name="Brown S."/>
            <person name="Chillingworth T."/>
            <person name="Churcher C.M."/>
            <person name="Collins M."/>
            <person name="Connor R."/>
            <person name="Cronin A."/>
            <person name="Davis P."/>
            <person name="Feltwell T."/>
            <person name="Fraser A."/>
            <person name="Gentles S."/>
            <person name="Goble A."/>
            <person name="Hamlin N."/>
            <person name="Harris D.E."/>
            <person name="Hidalgo J."/>
            <person name="Hodgson G."/>
            <person name="Holroyd S."/>
            <person name="Hornsby T."/>
            <person name="Howarth S."/>
            <person name="Huckle E.J."/>
            <person name="Hunt S."/>
            <person name="Jagels K."/>
            <person name="James K.D."/>
            <person name="Jones L."/>
            <person name="Jones M."/>
            <person name="Leather S."/>
            <person name="McDonald S."/>
            <person name="McLean J."/>
            <person name="Mooney P."/>
            <person name="Moule S."/>
            <person name="Mungall K.L."/>
            <person name="Murphy L.D."/>
            <person name="Niblett D."/>
            <person name="Odell C."/>
            <person name="Oliver K."/>
            <person name="O'Neil S."/>
            <person name="Pearson D."/>
            <person name="Quail M.A."/>
            <person name="Rabbinowitsch E."/>
            <person name="Rutherford K.M."/>
            <person name="Rutter S."/>
            <person name="Saunders D."/>
            <person name="Seeger K."/>
            <person name="Sharp S."/>
            <person name="Skelton J."/>
            <person name="Simmonds M.N."/>
            <person name="Squares R."/>
            <person name="Squares S."/>
            <person name="Stevens K."/>
            <person name="Taylor K."/>
            <person name="Taylor R.G."/>
            <person name="Tivey A."/>
            <person name="Walsh S.V."/>
            <person name="Warren T."/>
            <person name="Whitehead S."/>
            <person name="Woodward J.R."/>
            <person name="Volckaert G."/>
            <person name="Aert R."/>
            <person name="Robben J."/>
            <person name="Grymonprez B."/>
            <person name="Weltjens I."/>
            <person name="Vanstreels E."/>
            <person name="Rieger M."/>
            <person name="Schaefer M."/>
            <person name="Mueller-Auer S."/>
            <person name="Gabel C."/>
            <person name="Fuchs M."/>
            <person name="Duesterhoeft A."/>
            <person name="Fritzc C."/>
            <person name="Holzer E."/>
            <person name="Moestl D."/>
            <person name="Hilbert H."/>
            <person name="Borzym K."/>
            <person name="Langer I."/>
            <person name="Beck A."/>
            <person name="Lehrach H."/>
            <person name="Reinhardt R."/>
            <person name="Pohl T.M."/>
            <person name="Eger P."/>
            <person name="Zimmermann W."/>
            <person name="Wedler H."/>
            <person name="Wambutt R."/>
            <person name="Purnelle B."/>
            <person name="Goffeau A."/>
            <person name="Cadieu E."/>
            <person name="Dreano S."/>
            <person name="Gloux S."/>
            <person name="Lelaure V."/>
            <person name="Mottier S."/>
            <person name="Galibert F."/>
            <person name="Aves S.J."/>
            <person name="Xiang Z."/>
            <person name="Hunt C."/>
            <person name="Moore K."/>
            <person name="Hurst S.M."/>
            <person name="Lucas M."/>
            <person name="Rochet M."/>
            <person name="Gaillardin C."/>
            <person name="Tallada V.A."/>
            <person name="Garzon A."/>
            <person name="Thode G."/>
            <person name="Daga R.R."/>
            <person name="Cruzado L."/>
            <person name="Jimenez J."/>
            <person name="Sanchez M."/>
            <person name="del Rey F."/>
            <person name="Benito J."/>
            <person name="Dominguez A."/>
            <person name="Revuelta J.L."/>
            <person name="Moreno S."/>
            <person name="Armstrong J."/>
            <person name="Forsburg S.L."/>
            <person name="Cerutti L."/>
            <person name="Lowe T."/>
            <person name="McCombie W.R."/>
            <person name="Paulsen I."/>
            <person name="Potashkin J."/>
            <person name="Shpakovski G.V."/>
            <person name="Ussery D."/>
            <person name="Barrell B.G."/>
            <person name="Nurse P."/>
        </authorList>
    </citation>
    <scope>NUCLEOTIDE SEQUENCE [LARGE SCALE GENOMIC DNA]</scope>
    <source>
        <strain>972 / ATCC 24843</strain>
    </source>
</reference>
<feature type="chain" id="PRO_0000311179" description="Uncharacterized mitochondrial carrier C8C9.12c">
    <location>
        <begin position="1"/>
        <end position="303"/>
    </location>
</feature>
<feature type="transmembrane region" description="Helical; Name=1" evidence="1">
    <location>
        <begin position="12"/>
        <end position="32"/>
    </location>
</feature>
<feature type="transmembrane region" description="Helical; Name=2" evidence="1">
    <location>
        <begin position="81"/>
        <end position="101"/>
    </location>
</feature>
<feature type="transmembrane region" description="Helical; Name=3" evidence="1">
    <location>
        <begin position="117"/>
        <end position="137"/>
    </location>
</feature>
<feature type="transmembrane region" description="Helical; Name=4" evidence="1">
    <location>
        <begin position="174"/>
        <end position="194"/>
    </location>
</feature>
<feature type="transmembrane region" description="Helical; Name=5" evidence="1">
    <location>
        <begin position="208"/>
        <end position="228"/>
    </location>
</feature>
<feature type="transmembrane region" description="Helical; Name=6" evidence="1">
    <location>
        <begin position="265"/>
        <end position="286"/>
    </location>
</feature>
<feature type="repeat" description="Solcar 1">
    <location>
        <begin position="17"/>
        <end position="105"/>
    </location>
</feature>
<feature type="repeat" description="Solcar 2">
    <location>
        <begin position="111"/>
        <end position="195"/>
    </location>
</feature>
<feature type="repeat" description="Solcar 3">
    <location>
        <begin position="206"/>
        <end position="293"/>
    </location>
</feature>
<accession>O14281</accession>
<comment type="subcellular location">
    <subcellularLocation>
        <location evidence="2">Mitochondrion inner membrane</location>
        <topology evidence="2">Multi-pass membrane protein</topology>
    </subcellularLocation>
</comment>
<comment type="similarity">
    <text evidence="2">Belongs to the mitochondrial carrier (TC 2.A.29) family.</text>
</comment>